<dbReference type="EMBL" id="BA000033">
    <property type="protein sequence ID" value="BAB94125.1"/>
    <property type="molecule type" value="Genomic_DNA"/>
</dbReference>
<dbReference type="RefSeq" id="WP_000928935.1">
    <property type="nucleotide sequence ID" value="NC_003923.1"/>
</dbReference>
<dbReference type="KEGG" id="sam:MW0260"/>
<dbReference type="HOGENOM" id="CLU_144832_0_0_9"/>
<dbReference type="GO" id="GO:0005886">
    <property type="term" value="C:plasma membrane"/>
    <property type="evidence" value="ECO:0007669"/>
    <property type="project" value="UniProtKB-SubCell"/>
</dbReference>
<dbReference type="InterPro" id="IPR034026">
    <property type="entry name" value="EssA"/>
</dbReference>
<dbReference type="InterPro" id="IPR018920">
    <property type="entry name" value="EssA/YueC"/>
</dbReference>
<dbReference type="NCBIfam" id="TIGR03927">
    <property type="entry name" value="T7SS_EssA_Firm"/>
    <property type="match status" value="1"/>
</dbReference>
<dbReference type="Pfam" id="PF10661">
    <property type="entry name" value="EssA"/>
    <property type="match status" value="1"/>
</dbReference>
<sequence length="152" mass="17393">MLMNSVIALTFLTASSNNGGLNIDVQQEEEKRINNDLNQYDTTLFNKDSKAVNDAIAKQKKERQQQIKNDMFQNQASHSTRLNETKKVLFSKSNLEKTSESDKSPYIQNKQEKKIFPYILMSVGAFLTLGFVIFSIHKGRRTKNESARKSNI</sequence>
<accession>Q8NYF4</accession>
<organism>
    <name type="scientific">Staphylococcus aureus (strain MW2)</name>
    <dbReference type="NCBI Taxonomy" id="196620"/>
    <lineage>
        <taxon>Bacteria</taxon>
        <taxon>Bacillati</taxon>
        <taxon>Bacillota</taxon>
        <taxon>Bacilli</taxon>
        <taxon>Bacillales</taxon>
        <taxon>Staphylococcaceae</taxon>
        <taxon>Staphylococcus</taxon>
    </lineage>
</organism>
<proteinExistence type="inferred from homology"/>
<evidence type="ECO:0000250" key="1">
    <source>
        <dbReference type="UniProtKB" id="P0C052"/>
    </source>
</evidence>
<evidence type="ECO:0000255" key="2"/>
<evidence type="ECO:0000256" key="3">
    <source>
        <dbReference type="SAM" id="MobiDB-lite"/>
    </source>
</evidence>
<evidence type="ECO:0000305" key="4"/>
<keyword id="KW-1003">Cell membrane</keyword>
<keyword id="KW-0472">Membrane</keyword>
<keyword id="KW-0812">Transmembrane</keyword>
<keyword id="KW-1133">Transmembrane helix</keyword>
<keyword id="KW-0843">Virulence</keyword>
<feature type="chain" id="PRO_0000019575" description="ESAT-6 secretion machinery protein EssA">
    <location>
        <begin position="1"/>
        <end position="152"/>
    </location>
</feature>
<feature type="topological domain" description="Cytoplasmic" evidence="1">
    <location>
        <begin position="1"/>
        <end position="114"/>
    </location>
</feature>
<feature type="transmembrane region" description="Helical" evidence="2">
    <location>
        <begin position="115"/>
        <end position="135"/>
    </location>
</feature>
<feature type="topological domain" description="Extracellular" evidence="1">
    <location>
        <begin position="136"/>
        <end position="152"/>
    </location>
</feature>
<feature type="region of interest" description="Disordered" evidence="3">
    <location>
        <begin position="62"/>
        <end position="83"/>
    </location>
</feature>
<feature type="compositionally biased region" description="Polar residues" evidence="3">
    <location>
        <begin position="66"/>
        <end position="80"/>
    </location>
</feature>
<reference key="1">
    <citation type="journal article" date="2002" name="Lancet">
        <title>Genome and virulence determinants of high virulence community-acquired MRSA.</title>
        <authorList>
            <person name="Baba T."/>
            <person name="Takeuchi F."/>
            <person name="Kuroda M."/>
            <person name="Yuzawa H."/>
            <person name="Aoki K."/>
            <person name="Oguchi A."/>
            <person name="Nagai Y."/>
            <person name="Iwama N."/>
            <person name="Asano K."/>
            <person name="Naimi T."/>
            <person name="Kuroda H."/>
            <person name="Cui L."/>
            <person name="Yamamoto K."/>
            <person name="Hiramatsu K."/>
        </authorList>
    </citation>
    <scope>NUCLEOTIDE SEQUENCE [LARGE SCALE GENOMIC DNA]</scope>
    <source>
        <strain>MW2</strain>
    </source>
</reference>
<gene>
    <name evidence="1" type="primary">essA</name>
    <name type="ordered locus">MW0260</name>
</gene>
<name>ESSA_STAAW</name>
<comment type="function">
    <text evidence="1">Component of the ESAT-6 secretion system (Ess). Required for the secretion of EsxA and EsxB.</text>
</comment>
<comment type="subcellular location">
    <subcellularLocation>
        <location evidence="1">Cell membrane</location>
        <topology evidence="2">Single-pass type I membrane protein</topology>
    </subcellularLocation>
</comment>
<comment type="similarity">
    <text evidence="4">Belongs to the EssA family.</text>
</comment>
<protein>
    <recommendedName>
        <fullName evidence="1">ESAT-6 secretion machinery protein EssA</fullName>
    </recommendedName>
</protein>